<evidence type="ECO:0000250" key="1"/>
<evidence type="ECO:0000305" key="2"/>
<accession>Q8ZLT0</accession>
<proteinExistence type="inferred from homology"/>
<organism>
    <name type="scientific">Salmonella typhimurium (strain LT2 / SGSC1412 / ATCC 700720)</name>
    <dbReference type="NCBI Taxonomy" id="99287"/>
    <lineage>
        <taxon>Bacteria</taxon>
        <taxon>Pseudomonadati</taxon>
        <taxon>Pseudomonadota</taxon>
        <taxon>Gammaproteobacteria</taxon>
        <taxon>Enterobacterales</taxon>
        <taxon>Enterobacteriaceae</taxon>
        <taxon>Salmonella</taxon>
    </lineage>
</organism>
<reference key="1">
    <citation type="journal article" date="2001" name="Nature">
        <title>Complete genome sequence of Salmonella enterica serovar Typhimurium LT2.</title>
        <authorList>
            <person name="McClelland M."/>
            <person name="Sanderson K.E."/>
            <person name="Spieth J."/>
            <person name="Clifton S.W."/>
            <person name="Latreille P."/>
            <person name="Courtney L."/>
            <person name="Porwollik S."/>
            <person name="Ali J."/>
            <person name="Dante M."/>
            <person name="Du F."/>
            <person name="Hou S."/>
            <person name="Layman D."/>
            <person name="Leonard S."/>
            <person name="Nguyen C."/>
            <person name="Scott K."/>
            <person name="Holmes A."/>
            <person name="Grewal N."/>
            <person name="Mulvaney E."/>
            <person name="Ryan E."/>
            <person name="Sun H."/>
            <person name="Florea L."/>
            <person name="Miller W."/>
            <person name="Stoneking T."/>
            <person name="Nhan M."/>
            <person name="Waterston R."/>
            <person name="Wilson R.K."/>
        </authorList>
    </citation>
    <scope>NUCLEOTIDE SEQUENCE [LARGE SCALE GENOMIC DNA]</scope>
    <source>
        <strain>LT2 / SGSC1412 / ATCC 700720</strain>
    </source>
</reference>
<dbReference type="EC" id="6.3.4.5"/>
<dbReference type="EMBL" id="AE006468">
    <property type="protein sequence ID" value="AAL22161.1"/>
    <property type="status" value="ALT_INIT"/>
    <property type="molecule type" value="Genomic_DNA"/>
</dbReference>
<dbReference type="RefSeq" id="NP_462202.3">
    <property type="nucleotide sequence ID" value="NC_003197.2"/>
</dbReference>
<dbReference type="RefSeq" id="WP_014343910.1">
    <property type="nucleotide sequence ID" value="NC_003197.2"/>
</dbReference>
<dbReference type="SMR" id="Q8ZLT0"/>
<dbReference type="STRING" id="99287.STM3290"/>
<dbReference type="PaxDb" id="99287-STM3290"/>
<dbReference type="GeneID" id="1254813"/>
<dbReference type="KEGG" id="stm:STM3290"/>
<dbReference type="PATRIC" id="fig|99287.12.peg.3488"/>
<dbReference type="HOGENOM" id="CLU_032784_4_1_6"/>
<dbReference type="OMA" id="WRWTVSP"/>
<dbReference type="PhylomeDB" id="Q8ZLT0"/>
<dbReference type="UniPathway" id="UPA00068">
    <property type="reaction ID" value="UER00113"/>
</dbReference>
<dbReference type="Proteomes" id="UP000001014">
    <property type="component" value="Chromosome"/>
</dbReference>
<dbReference type="GO" id="GO:0005737">
    <property type="term" value="C:cytoplasm"/>
    <property type="evidence" value="ECO:0000318"/>
    <property type="project" value="GO_Central"/>
</dbReference>
<dbReference type="GO" id="GO:0004055">
    <property type="term" value="F:argininosuccinate synthase activity"/>
    <property type="evidence" value="ECO:0000318"/>
    <property type="project" value="GO_Central"/>
</dbReference>
<dbReference type="GO" id="GO:0005524">
    <property type="term" value="F:ATP binding"/>
    <property type="evidence" value="ECO:0007669"/>
    <property type="project" value="UniProtKB-UniRule"/>
</dbReference>
<dbReference type="GO" id="GO:0042803">
    <property type="term" value="F:protein homodimerization activity"/>
    <property type="evidence" value="ECO:0007669"/>
    <property type="project" value="InterPro"/>
</dbReference>
<dbReference type="GO" id="GO:0000053">
    <property type="term" value="P:argininosuccinate metabolic process"/>
    <property type="evidence" value="ECO:0000318"/>
    <property type="project" value="GO_Central"/>
</dbReference>
<dbReference type="GO" id="GO:0006526">
    <property type="term" value="P:L-arginine biosynthetic process"/>
    <property type="evidence" value="ECO:0000318"/>
    <property type="project" value="GO_Central"/>
</dbReference>
<dbReference type="GO" id="GO:0000050">
    <property type="term" value="P:urea cycle"/>
    <property type="evidence" value="ECO:0000318"/>
    <property type="project" value="GO_Central"/>
</dbReference>
<dbReference type="CDD" id="cd01999">
    <property type="entry name" value="ASS"/>
    <property type="match status" value="1"/>
</dbReference>
<dbReference type="FunFam" id="1.10.287.400:FF:000001">
    <property type="entry name" value="Argininosuccinate synthase"/>
    <property type="match status" value="1"/>
</dbReference>
<dbReference type="Gene3D" id="1.10.287.400">
    <property type="match status" value="1"/>
</dbReference>
<dbReference type="Gene3D" id="3.90.1260.10">
    <property type="entry name" value="Argininosuccinate synthetase, chain A, domain 2"/>
    <property type="match status" value="1"/>
</dbReference>
<dbReference type="Gene3D" id="3.40.50.620">
    <property type="entry name" value="HUPs"/>
    <property type="match status" value="1"/>
</dbReference>
<dbReference type="HAMAP" id="MF_00581">
    <property type="entry name" value="Arg_succ_synth_type2"/>
    <property type="match status" value="1"/>
</dbReference>
<dbReference type="InterPro" id="IPR023437">
    <property type="entry name" value="Arg_succ_synth_type2_subfam"/>
</dbReference>
<dbReference type="InterPro" id="IPR048268">
    <property type="entry name" value="Arginosuc_syn_C"/>
</dbReference>
<dbReference type="InterPro" id="IPR048267">
    <property type="entry name" value="Arginosuc_syn_N"/>
</dbReference>
<dbReference type="InterPro" id="IPR001518">
    <property type="entry name" value="Arginosuc_synth"/>
</dbReference>
<dbReference type="InterPro" id="IPR018223">
    <property type="entry name" value="Arginosuc_synth_CS"/>
</dbReference>
<dbReference type="InterPro" id="IPR023434">
    <property type="entry name" value="Arginosuc_synth_type_1_subfam"/>
</dbReference>
<dbReference type="InterPro" id="IPR024074">
    <property type="entry name" value="AS_cat/multimer_dom_body"/>
</dbReference>
<dbReference type="InterPro" id="IPR024073">
    <property type="entry name" value="AS_multimer_C_tail"/>
</dbReference>
<dbReference type="InterPro" id="IPR014729">
    <property type="entry name" value="Rossmann-like_a/b/a_fold"/>
</dbReference>
<dbReference type="NCBIfam" id="TIGR00032">
    <property type="entry name" value="argG"/>
    <property type="match status" value="1"/>
</dbReference>
<dbReference type="NCBIfam" id="NF003779">
    <property type="entry name" value="PRK05370.1"/>
    <property type="match status" value="1"/>
</dbReference>
<dbReference type="PANTHER" id="PTHR11587">
    <property type="entry name" value="ARGININOSUCCINATE SYNTHASE"/>
    <property type="match status" value="1"/>
</dbReference>
<dbReference type="PANTHER" id="PTHR11587:SF2">
    <property type="entry name" value="ARGININOSUCCINATE SYNTHASE"/>
    <property type="match status" value="1"/>
</dbReference>
<dbReference type="Pfam" id="PF20979">
    <property type="entry name" value="Arginosuc_syn_C"/>
    <property type="match status" value="1"/>
</dbReference>
<dbReference type="Pfam" id="PF00764">
    <property type="entry name" value="Arginosuc_synth"/>
    <property type="match status" value="1"/>
</dbReference>
<dbReference type="SUPFAM" id="SSF52402">
    <property type="entry name" value="Adenine nucleotide alpha hydrolases-like"/>
    <property type="match status" value="1"/>
</dbReference>
<dbReference type="SUPFAM" id="SSF69864">
    <property type="entry name" value="Argininosuccinate synthetase, C-terminal domain"/>
    <property type="match status" value="1"/>
</dbReference>
<dbReference type="PROSITE" id="PS00564">
    <property type="entry name" value="ARGININOSUCCIN_SYN_1"/>
    <property type="match status" value="1"/>
</dbReference>
<dbReference type="PROSITE" id="PS00565">
    <property type="entry name" value="ARGININOSUCCIN_SYN_2"/>
    <property type="match status" value="1"/>
</dbReference>
<protein>
    <recommendedName>
        <fullName>Argininosuccinate synthase</fullName>
        <ecNumber>6.3.4.5</ecNumber>
    </recommendedName>
    <alternativeName>
        <fullName>Citrulline--aspartate ligase</fullName>
    </alternativeName>
</protein>
<keyword id="KW-0028">Amino-acid biosynthesis</keyword>
<keyword id="KW-0055">Arginine biosynthesis</keyword>
<keyword id="KW-0067">ATP-binding</keyword>
<keyword id="KW-0963">Cytoplasm</keyword>
<keyword id="KW-0436">Ligase</keyword>
<keyword id="KW-0547">Nucleotide-binding</keyword>
<keyword id="KW-1185">Reference proteome</keyword>
<gene>
    <name type="primary">argG</name>
    <name type="ordered locus">STM3290</name>
</gene>
<sequence length="447" mass="49754">MTTILKHLPAGQRIGIAFSGGLDTSAALLWMRQKGAVPYAYTANLGQPDEDDYDAIPRRAMEYGAENARLIDCRKQLVAEGIAAIQCGAFHNTTGGLTYFNTTPLGRAVTGTMLVAAMKEDGVNIWGDGSTYKGNDIERFYRYGLLTNAELQIYKPWLDTDFIDELGGRHEMSEFMIACGFDYKMSVEKAYSTDSNMLGATHEAKDLEFLNSSVKIVNPIMGVKFWDESVKIPAEVVTVRFEQGHPVALNGKTFSDDVEMMLEANRIGGRHGLGMSDQIENRIIEAKSRGIYEAPGMALLHIAYERLLTGIHNEDTIEQYHSHGRQLGKLLYQGRWFDSQALMLRDGLQRWVASQITGEVTLELRRGNDYSILNTVSDNLTYKAERLTMEKGESVFSPDDRIGQLTMRNLDITDTREKLFGYAKAGLLTASSATGLPQVENLENKGK</sequence>
<feature type="initiator methionine" description="Removed" evidence="1">
    <location>
        <position position="1"/>
    </location>
</feature>
<feature type="chain" id="PRO_0000148706" description="Argininosuccinate synthase">
    <location>
        <begin position="2"/>
        <end position="447"/>
    </location>
</feature>
<feature type="binding site" evidence="1">
    <location>
        <begin position="17"/>
        <end position="25"/>
    </location>
    <ligand>
        <name>ATP</name>
        <dbReference type="ChEBI" id="CHEBI:30616"/>
    </ligand>
</feature>
<feature type="binding site" evidence="1">
    <location>
        <position position="43"/>
    </location>
    <ligand>
        <name>ATP</name>
        <dbReference type="ChEBI" id="CHEBI:30616"/>
    </ligand>
</feature>
<feature type="binding site" evidence="1">
    <location>
        <position position="99"/>
    </location>
    <ligand>
        <name>L-citrulline</name>
        <dbReference type="ChEBI" id="CHEBI:57743"/>
    </ligand>
</feature>
<feature type="binding site" evidence="1">
    <location>
        <position position="129"/>
    </location>
    <ligand>
        <name>ATP</name>
        <dbReference type="ChEBI" id="CHEBI:30616"/>
    </ligand>
</feature>
<feature type="binding site" evidence="1">
    <location>
        <position position="131"/>
    </location>
    <ligand>
        <name>ATP</name>
        <dbReference type="ChEBI" id="CHEBI:30616"/>
    </ligand>
</feature>
<feature type="binding site" evidence="1">
    <location>
        <position position="131"/>
    </location>
    <ligand>
        <name>L-aspartate</name>
        <dbReference type="ChEBI" id="CHEBI:29991"/>
    </ligand>
</feature>
<feature type="binding site" evidence="1">
    <location>
        <position position="135"/>
    </location>
    <ligand>
        <name>L-aspartate</name>
        <dbReference type="ChEBI" id="CHEBI:29991"/>
    </ligand>
</feature>
<feature type="binding site" evidence="1">
    <location>
        <position position="135"/>
    </location>
    <ligand>
        <name>L-citrulline</name>
        <dbReference type="ChEBI" id="CHEBI:57743"/>
    </ligand>
</feature>
<feature type="binding site" evidence="1">
    <location>
        <position position="136"/>
    </location>
    <ligand>
        <name>ATP</name>
        <dbReference type="ChEBI" id="CHEBI:30616"/>
    </ligand>
</feature>
<feature type="binding site" evidence="1">
    <location>
        <position position="136"/>
    </location>
    <ligand>
        <name>L-aspartate</name>
        <dbReference type="ChEBI" id="CHEBI:29991"/>
    </ligand>
</feature>
<feature type="binding site" evidence="1">
    <location>
        <position position="139"/>
    </location>
    <ligand>
        <name>L-citrulline</name>
        <dbReference type="ChEBI" id="CHEBI:57743"/>
    </ligand>
</feature>
<feature type="binding site" evidence="1">
    <location>
        <position position="192"/>
    </location>
    <ligand>
        <name>L-citrulline</name>
        <dbReference type="ChEBI" id="CHEBI:57743"/>
    </ligand>
</feature>
<feature type="binding site" evidence="1">
    <location>
        <position position="194"/>
    </location>
    <ligand>
        <name>ATP</name>
        <dbReference type="ChEBI" id="CHEBI:30616"/>
    </ligand>
</feature>
<feature type="binding site" evidence="1">
    <location>
        <position position="201"/>
    </location>
    <ligand>
        <name>L-citrulline</name>
        <dbReference type="ChEBI" id="CHEBI:57743"/>
    </ligand>
</feature>
<feature type="binding site" evidence="1">
    <location>
        <position position="203"/>
    </location>
    <ligand>
        <name>L-citrulline</name>
        <dbReference type="ChEBI" id="CHEBI:57743"/>
    </ligand>
</feature>
<feature type="binding site" evidence="1">
    <location>
        <position position="280"/>
    </location>
    <ligand>
        <name>L-citrulline</name>
        <dbReference type="ChEBI" id="CHEBI:57743"/>
    </ligand>
</feature>
<comment type="catalytic activity">
    <reaction>
        <text>L-citrulline + L-aspartate + ATP = 2-(N(omega)-L-arginino)succinate + AMP + diphosphate + H(+)</text>
        <dbReference type="Rhea" id="RHEA:10932"/>
        <dbReference type="ChEBI" id="CHEBI:15378"/>
        <dbReference type="ChEBI" id="CHEBI:29991"/>
        <dbReference type="ChEBI" id="CHEBI:30616"/>
        <dbReference type="ChEBI" id="CHEBI:33019"/>
        <dbReference type="ChEBI" id="CHEBI:57472"/>
        <dbReference type="ChEBI" id="CHEBI:57743"/>
        <dbReference type="ChEBI" id="CHEBI:456215"/>
        <dbReference type="EC" id="6.3.4.5"/>
    </reaction>
</comment>
<comment type="pathway">
    <text>Amino-acid biosynthesis; L-arginine biosynthesis; L-arginine from L-ornithine and carbamoyl phosphate: step 2/3.</text>
</comment>
<comment type="subunit">
    <text evidence="1">Homotetramer.</text>
</comment>
<comment type="subcellular location">
    <subcellularLocation>
        <location evidence="1">Cytoplasm</location>
    </subcellularLocation>
</comment>
<comment type="similarity">
    <text evidence="2">Belongs to the argininosuccinate synthase family. Type 2 subfamily.</text>
</comment>
<comment type="sequence caution" evidence="2">
    <conflict type="erroneous initiation">
        <sequence resource="EMBL-CDS" id="AAL22161"/>
    </conflict>
</comment>
<name>ASSY_SALTY</name>